<keyword id="KW-0433">Leucine-rich repeat</keyword>
<keyword id="KW-1185">Reference proteome</keyword>
<keyword id="KW-0677">Repeat</keyword>
<protein>
    <recommendedName>
        <fullName evidence="2">PRAME family member 13</fullName>
    </recommendedName>
</protein>
<evidence type="ECO:0000250" key="1">
    <source>
        <dbReference type="UniProtKB" id="Q3UWY1"/>
    </source>
</evidence>
<evidence type="ECO:0000305" key="2"/>
<evidence type="ECO:0000312" key="3">
    <source>
        <dbReference type="HGNC" id="HGNC:13262"/>
    </source>
</evidence>
<organism>
    <name type="scientific">Homo sapiens</name>
    <name type="common">Human</name>
    <dbReference type="NCBI Taxonomy" id="9606"/>
    <lineage>
        <taxon>Eukaryota</taxon>
        <taxon>Metazoa</taxon>
        <taxon>Chordata</taxon>
        <taxon>Craniata</taxon>
        <taxon>Vertebrata</taxon>
        <taxon>Euteleostomi</taxon>
        <taxon>Mammalia</taxon>
        <taxon>Eutheria</taxon>
        <taxon>Euarchontoglires</taxon>
        <taxon>Primates</taxon>
        <taxon>Haplorrhini</taxon>
        <taxon>Catarrhini</taxon>
        <taxon>Hominidae</taxon>
        <taxon>Homo</taxon>
    </lineage>
</organism>
<sequence>MSIQAPPRLLELAGQSLLRDQALSISAMEELPRVLYLPLFMEAFRRRHFQTLTVMVQAWPFTCLPLGSLMKTLHLETLKALLEGLHMLLTQKDRPRRRKLQVLDLRDVDENFWARWPGAWALSCFPETMSKRQTAEDRPRMGEHQPLKVFIDICLKEIPQDECLRYLFQWVYQRRGLVHLCCSKLVNYLTPIKHLRKSLKIIYLNSIQELEIHNMSWPRLIRKLRCYLKEMKTLGKLVFSRCHHSTSDNELEGRLVTKFSSVFLGLEHLQLLKIKLITFFSGHLEQLIRCLQNPLENLELTYGYLLEEDVKCLSQYPSLGYLKHLNLSYVLLFRISLEPLGALLEKIAASLETLILEGCQIHYSQLSAILPGLSRCSQLTTFYFGRNCMSMGALKDLLRHTSGLSKLSLETYPAPEESLNSLVRVNWEIFTPLRAELMCTLREVRQPKRIFIGPTPCPSCGSSLSEELELHLCC</sequence>
<dbReference type="EMBL" id="AC244216">
    <property type="status" value="NOT_ANNOTATED_CDS"/>
    <property type="molecule type" value="Genomic_DNA"/>
</dbReference>
<dbReference type="EMBL" id="AC245056">
    <property type="status" value="NOT_ANNOTATED_CDS"/>
    <property type="molecule type" value="Genomic_DNA"/>
</dbReference>
<dbReference type="EMBL" id="AL365443">
    <property type="status" value="NOT_ANNOTATED_CDS"/>
    <property type="molecule type" value="Genomic_DNA"/>
</dbReference>
<dbReference type="CCDS" id="CCDS85927.1"/>
<dbReference type="RefSeq" id="NP_001278309.1">
    <property type="nucleotide sequence ID" value="NM_001291380.1"/>
</dbReference>
<dbReference type="SMR" id="Q5VWM6"/>
<dbReference type="FunCoup" id="Q5VWM6">
    <property type="interactions" value="24"/>
</dbReference>
<dbReference type="STRING" id="9606.ENSP00000491259"/>
<dbReference type="GlyGen" id="Q5VWM6">
    <property type="glycosylation" value="1 site"/>
</dbReference>
<dbReference type="iPTMnet" id="Q5VWM6"/>
<dbReference type="PhosphoSitePlus" id="Q5VWM6"/>
<dbReference type="BioMuta" id="PRAMEF13"/>
<dbReference type="DMDM" id="74747421"/>
<dbReference type="jPOST" id="Q5VWM6"/>
<dbReference type="MassIVE" id="Q5VWM6"/>
<dbReference type="PeptideAtlas" id="Q5VWM6"/>
<dbReference type="Pumba" id="Q5VWM6"/>
<dbReference type="Antibodypedia" id="78644">
    <property type="antibodies" value="7 antibodies from 1 providers"/>
</dbReference>
<dbReference type="DNASU" id="400736"/>
<dbReference type="Ensembl" id="ENST00000625019.3">
    <property type="protein sequence ID" value="ENSP00000491259.1"/>
    <property type="gene ID" value="ENSG00000279169.3"/>
</dbReference>
<dbReference type="Ensembl" id="ENST00000632392.3">
    <property type="protein sequence ID" value="ENSP00000492522.1"/>
    <property type="gene ID" value="ENSG00000282741.3"/>
</dbReference>
<dbReference type="GeneID" id="400736"/>
<dbReference type="KEGG" id="hsa:400736"/>
<dbReference type="MANE-Select" id="ENST00000625019.3">
    <property type="protein sequence ID" value="ENSP00000491259.1"/>
    <property type="RefSeq nucleotide sequence ID" value="NM_001291380.1"/>
    <property type="RefSeq protein sequence ID" value="NP_001278309.1"/>
</dbReference>
<dbReference type="AGR" id="HGNC:13262"/>
<dbReference type="CTD" id="400736"/>
<dbReference type="GeneCards" id="PRAMEF13"/>
<dbReference type="HGNC" id="HGNC:13262">
    <property type="gene designation" value="PRAMEF13"/>
</dbReference>
<dbReference type="HPA" id="ENSG00000279169">
    <property type="expression patterns" value="Not detected"/>
</dbReference>
<dbReference type="neXtProt" id="NX_Q5VWM6"/>
<dbReference type="OpenTargets" id="ENSG00000279169"/>
<dbReference type="PharmGKB" id="PA145148169"/>
<dbReference type="VEuPathDB" id="HostDB:ENSG00000279169"/>
<dbReference type="GeneTree" id="ENSGT01030000234531"/>
<dbReference type="InParanoid" id="Q5VWM6"/>
<dbReference type="OMA" id="ECLVAKI"/>
<dbReference type="OrthoDB" id="9623026at2759"/>
<dbReference type="PAN-GO" id="Q5VWM6">
    <property type="GO annotations" value="1 GO annotation based on evolutionary models"/>
</dbReference>
<dbReference type="TreeFam" id="TF332708"/>
<dbReference type="PathwayCommons" id="Q5VWM6"/>
<dbReference type="BioGRID-ORCS" id="400736">
    <property type="hits" value="20 hits in 612 CRISPR screens"/>
</dbReference>
<dbReference type="GenomeRNAi" id="400736"/>
<dbReference type="Pharos" id="Q5VWM6">
    <property type="development level" value="Tdark"/>
</dbReference>
<dbReference type="PRO" id="PR:Q5VWM6"/>
<dbReference type="Proteomes" id="UP000005640">
    <property type="component" value="Chromosome 1"/>
</dbReference>
<dbReference type="RNAct" id="Q5VWM6">
    <property type="molecule type" value="protein"/>
</dbReference>
<dbReference type="Bgee" id="ENSG00000279169">
    <property type="expression patterns" value="Expressed in male germ line stem cell (sensu Vertebrata) in testis and 1 other cell type or tissue"/>
</dbReference>
<dbReference type="ExpressionAtlas" id="Q5VWM6">
    <property type="expression patterns" value="baseline"/>
</dbReference>
<dbReference type="GO" id="GO:0031462">
    <property type="term" value="C:Cul2-RING ubiquitin ligase complex"/>
    <property type="evidence" value="ECO:0000318"/>
    <property type="project" value="GO_Central"/>
</dbReference>
<dbReference type="GO" id="GO:0005737">
    <property type="term" value="C:cytoplasm"/>
    <property type="evidence" value="ECO:0000318"/>
    <property type="project" value="GO_Central"/>
</dbReference>
<dbReference type="GO" id="GO:1990756">
    <property type="term" value="F:ubiquitin-like ligase-substrate adaptor activity"/>
    <property type="evidence" value="ECO:0000318"/>
    <property type="project" value="GO_Central"/>
</dbReference>
<dbReference type="GO" id="GO:0043066">
    <property type="term" value="P:negative regulation of apoptotic process"/>
    <property type="evidence" value="ECO:0007669"/>
    <property type="project" value="InterPro"/>
</dbReference>
<dbReference type="GO" id="GO:0045596">
    <property type="term" value="P:negative regulation of cell differentiation"/>
    <property type="evidence" value="ECO:0007669"/>
    <property type="project" value="InterPro"/>
</dbReference>
<dbReference type="GO" id="GO:0045892">
    <property type="term" value="P:negative regulation of DNA-templated transcription"/>
    <property type="evidence" value="ECO:0007669"/>
    <property type="project" value="InterPro"/>
</dbReference>
<dbReference type="GO" id="GO:0008284">
    <property type="term" value="P:positive regulation of cell population proliferation"/>
    <property type="evidence" value="ECO:0007669"/>
    <property type="project" value="InterPro"/>
</dbReference>
<dbReference type="GO" id="GO:0043161">
    <property type="term" value="P:proteasome-mediated ubiquitin-dependent protein catabolic process"/>
    <property type="evidence" value="ECO:0000318"/>
    <property type="project" value="GO_Central"/>
</dbReference>
<dbReference type="FunFam" id="3.80.10.10:FF:000079">
    <property type="entry name" value="PRAME family member 18"/>
    <property type="match status" value="1"/>
</dbReference>
<dbReference type="Gene3D" id="3.80.10.10">
    <property type="entry name" value="Ribonuclease Inhibitor"/>
    <property type="match status" value="1"/>
</dbReference>
<dbReference type="InterPro" id="IPR032675">
    <property type="entry name" value="LRR_dom_sf"/>
</dbReference>
<dbReference type="InterPro" id="IPR026271">
    <property type="entry name" value="PRAME"/>
</dbReference>
<dbReference type="InterPro" id="IPR050694">
    <property type="entry name" value="PRAME_domain"/>
</dbReference>
<dbReference type="PANTHER" id="PTHR14224:SF81">
    <property type="entry name" value="PRAME FAMILY MEMBER 1-RELATED"/>
    <property type="match status" value="1"/>
</dbReference>
<dbReference type="PANTHER" id="PTHR14224">
    <property type="entry name" value="SIMILAR TO PREFERENTIALLY EXPRESSED ANTIGEN IN MELANOMA-LIKE 3"/>
    <property type="match status" value="1"/>
</dbReference>
<dbReference type="PIRSF" id="PIRSF038286">
    <property type="entry name" value="PRAME"/>
    <property type="match status" value="1"/>
</dbReference>
<dbReference type="SUPFAM" id="SSF52047">
    <property type="entry name" value="RNI-like"/>
    <property type="match status" value="1"/>
</dbReference>
<proteinExistence type="inferred from homology"/>
<name>PRA13_HUMAN</name>
<accession>Q5VWM6</accession>
<reference key="1">
    <citation type="journal article" date="2006" name="Nature">
        <title>The DNA sequence and biological annotation of human chromosome 1.</title>
        <authorList>
            <person name="Gregory S.G."/>
            <person name="Barlow K.F."/>
            <person name="McLay K.E."/>
            <person name="Kaul R."/>
            <person name="Swarbreck D."/>
            <person name="Dunham A."/>
            <person name="Scott C.E."/>
            <person name="Howe K.L."/>
            <person name="Woodfine K."/>
            <person name="Spencer C.C.A."/>
            <person name="Jones M.C."/>
            <person name="Gillson C."/>
            <person name="Searle S."/>
            <person name="Zhou Y."/>
            <person name="Kokocinski F."/>
            <person name="McDonald L."/>
            <person name="Evans R."/>
            <person name="Phillips K."/>
            <person name="Atkinson A."/>
            <person name="Cooper R."/>
            <person name="Jones C."/>
            <person name="Hall R.E."/>
            <person name="Andrews T.D."/>
            <person name="Lloyd C."/>
            <person name="Ainscough R."/>
            <person name="Almeida J.P."/>
            <person name="Ambrose K.D."/>
            <person name="Anderson F."/>
            <person name="Andrew R.W."/>
            <person name="Ashwell R.I.S."/>
            <person name="Aubin K."/>
            <person name="Babbage A.K."/>
            <person name="Bagguley C.L."/>
            <person name="Bailey J."/>
            <person name="Beasley H."/>
            <person name="Bethel G."/>
            <person name="Bird C.P."/>
            <person name="Bray-Allen S."/>
            <person name="Brown J.Y."/>
            <person name="Brown A.J."/>
            <person name="Buckley D."/>
            <person name="Burton J."/>
            <person name="Bye J."/>
            <person name="Carder C."/>
            <person name="Chapman J.C."/>
            <person name="Clark S.Y."/>
            <person name="Clarke G."/>
            <person name="Clee C."/>
            <person name="Cobley V."/>
            <person name="Collier R.E."/>
            <person name="Corby N."/>
            <person name="Coville G.J."/>
            <person name="Davies J."/>
            <person name="Deadman R."/>
            <person name="Dunn M."/>
            <person name="Earthrowl M."/>
            <person name="Ellington A.G."/>
            <person name="Errington H."/>
            <person name="Frankish A."/>
            <person name="Frankland J."/>
            <person name="French L."/>
            <person name="Garner P."/>
            <person name="Garnett J."/>
            <person name="Gay L."/>
            <person name="Ghori M.R.J."/>
            <person name="Gibson R."/>
            <person name="Gilby L.M."/>
            <person name="Gillett W."/>
            <person name="Glithero R.J."/>
            <person name="Grafham D.V."/>
            <person name="Griffiths C."/>
            <person name="Griffiths-Jones S."/>
            <person name="Grocock R."/>
            <person name="Hammond S."/>
            <person name="Harrison E.S.I."/>
            <person name="Hart E."/>
            <person name="Haugen E."/>
            <person name="Heath P.D."/>
            <person name="Holmes S."/>
            <person name="Holt K."/>
            <person name="Howden P.J."/>
            <person name="Hunt A.R."/>
            <person name="Hunt S.E."/>
            <person name="Hunter G."/>
            <person name="Isherwood J."/>
            <person name="James R."/>
            <person name="Johnson C."/>
            <person name="Johnson D."/>
            <person name="Joy A."/>
            <person name="Kay M."/>
            <person name="Kershaw J.K."/>
            <person name="Kibukawa M."/>
            <person name="Kimberley A.M."/>
            <person name="King A."/>
            <person name="Knights A.J."/>
            <person name="Lad H."/>
            <person name="Laird G."/>
            <person name="Lawlor S."/>
            <person name="Leongamornlert D.A."/>
            <person name="Lloyd D.M."/>
            <person name="Loveland J."/>
            <person name="Lovell J."/>
            <person name="Lush M.J."/>
            <person name="Lyne R."/>
            <person name="Martin S."/>
            <person name="Mashreghi-Mohammadi M."/>
            <person name="Matthews L."/>
            <person name="Matthews N.S.W."/>
            <person name="McLaren S."/>
            <person name="Milne S."/>
            <person name="Mistry S."/>
            <person name="Moore M.J.F."/>
            <person name="Nickerson T."/>
            <person name="O'Dell C.N."/>
            <person name="Oliver K."/>
            <person name="Palmeiri A."/>
            <person name="Palmer S.A."/>
            <person name="Parker A."/>
            <person name="Patel D."/>
            <person name="Pearce A.V."/>
            <person name="Peck A.I."/>
            <person name="Pelan S."/>
            <person name="Phelps K."/>
            <person name="Phillimore B.J."/>
            <person name="Plumb R."/>
            <person name="Rajan J."/>
            <person name="Raymond C."/>
            <person name="Rouse G."/>
            <person name="Saenphimmachak C."/>
            <person name="Sehra H.K."/>
            <person name="Sheridan E."/>
            <person name="Shownkeen R."/>
            <person name="Sims S."/>
            <person name="Skuce C.D."/>
            <person name="Smith M."/>
            <person name="Steward C."/>
            <person name="Subramanian S."/>
            <person name="Sycamore N."/>
            <person name="Tracey A."/>
            <person name="Tromans A."/>
            <person name="Van Helmond Z."/>
            <person name="Wall M."/>
            <person name="Wallis J.M."/>
            <person name="White S."/>
            <person name="Whitehead S.L."/>
            <person name="Wilkinson J.E."/>
            <person name="Willey D.L."/>
            <person name="Williams H."/>
            <person name="Wilming L."/>
            <person name="Wray P.W."/>
            <person name="Wu Z."/>
            <person name="Coulson A."/>
            <person name="Vaudin M."/>
            <person name="Sulston J.E."/>
            <person name="Durbin R.M."/>
            <person name="Hubbard T."/>
            <person name="Wooster R."/>
            <person name="Dunham I."/>
            <person name="Carter N.P."/>
            <person name="McVean G."/>
            <person name="Ross M.T."/>
            <person name="Harrow J."/>
            <person name="Olson M.V."/>
            <person name="Beck S."/>
            <person name="Rogers J."/>
            <person name="Bentley D.R."/>
        </authorList>
    </citation>
    <scope>NUCLEOTIDE SEQUENCE [LARGE SCALE GENOMIC DNA]</scope>
</reference>
<comment type="similarity">
    <text evidence="2">Belongs to the PRAME family.</text>
</comment>
<gene>
    <name evidence="3" type="primary">PRAMEF13</name>
</gene>
<feature type="chain" id="PRO_0000290161" description="PRAME family member 13">
    <location>
        <begin position="1"/>
        <end position="474"/>
    </location>
</feature>
<feature type="repeat" description="LRR 1; degenerate" evidence="1">
    <location>
        <begin position="97"/>
        <end position="124"/>
    </location>
</feature>
<feature type="repeat" description="LRR 2; degenerate" evidence="1">
    <location>
        <begin position="179"/>
        <end position="203"/>
    </location>
</feature>
<feature type="repeat" description="LRR 3; degenerate" evidence="1">
    <location>
        <begin position="204"/>
        <end position="230"/>
    </location>
</feature>
<feature type="repeat" description="LRR 4; degenerate" evidence="1">
    <location>
        <begin position="231"/>
        <end position="265"/>
    </location>
</feature>
<feature type="repeat" description="LRR 5" evidence="1">
    <location>
        <begin position="266"/>
        <end position="291"/>
    </location>
</feature>
<feature type="repeat" description="LRR 6" evidence="1">
    <location>
        <begin position="292"/>
        <end position="323"/>
    </location>
</feature>
<feature type="repeat" description="LRR 7" evidence="1">
    <location>
        <begin position="324"/>
        <end position="342"/>
    </location>
</feature>
<feature type="repeat" description="LRR 8" evidence="1">
    <location>
        <begin position="348"/>
        <end position="375"/>
    </location>
</feature>
<feature type="repeat" description="LRR 9" evidence="1">
    <location>
        <begin position="376"/>
        <end position="400"/>
    </location>
</feature>